<evidence type="ECO:0000255" key="1">
    <source>
        <dbReference type="HAMAP-Rule" id="MF_00758"/>
    </source>
</evidence>
<proteinExistence type="inferred from homology"/>
<feature type="chain" id="PRO_0000258807" description="UPF0301 protein BMA1997">
    <location>
        <begin position="1"/>
        <end position="192"/>
    </location>
</feature>
<name>Y1997_BURMA</name>
<accession>Q62I86</accession>
<keyword id="KW-1185">Reference proteome</keyword>
<reference key="1">
    <citation type="journal article" date="2004" name="Proc. Natl. Acad. Sci. U.S.A.">
        <title>Structural flexibility in the Burkholderia mallei genome.</title>
        <authorList>
            <person name="Nierman W.C."/>
            <person name="DeShazer D."/>
            <person name="Kim H.S."/>
            <person name="Tettelin H."/>
            <person name="Nelson K.E."/>
            <person name="Feldblyum T.V."/>
            <person name="Ulrich R.L."/>
            <person name="Ronning C.M."/>
            <person name="Brinkac L.M."/>
            <person name="Daugherty S.C."/>
            <person name="Davidsen T.D."/>
            <person name="DeBoy R.T."/>
            <person name="Dimitrov G."/>
            <person name="Dodson R.J."/>
            <person name="Durkin A.S."/>
            <person name="Gwinn M.L."/>
            <person name="Haft D.H."/>
            <person name="Khouri H.M."/>
            <person name="Kolonay J.F."/>
            <person name="Madupu R."/>
            <person name="Mohammoud Y."/>
            <person name="Nelson W.C."/>
            <person name="Radune D."/>
            <person name="Romero C.M."/>
            <person name="Sarria S."/>
            <person name="Selengut J."/>
            <person name="Shamblin C."/>
            <person name="Sullivan S.A."/>
            <person name="White O."/>
            <person name="Yu Y."/>
            <person name="Zafar N."/>
            <person name="Zhou L."/>
            <person name="Fraser C.M."/>
        </authorList>
    </citation>
    <scope>NUCLEOTIDE SEQUENCE [LARGE SCALE GENOMIC DNA]</scope>
    <source>
        <strain>ATCC 23344</strain>
    </source>
</reference>
<gene>
    <name type="ordered locus">BMA1997</name>
</gene>
<protein>
    <recommendedName>
        <fullName evidence="1">UPF0301 protein BMA1997</fullName>
    </recommendedName>
</protein>
<comment type="similarity">
    <text evidence="1">Belongs to the UPF0301 (AlgH) family.</text>
</comment>
<sequence>MSKSSDRINLTNQFLIAMPNMADPTFSGTVVYLCDHSERGALGLVINRPTDIDLESLFNRIDLKLEIEPLLHIPVYFGGPVQTERGFVLHEPVEGSAYNSSMTVEGGLEMTTSKDVLEAVATGTGPKRFLLTLGHAGWGAGQLEEEISKNGWLTVAADPRIVFDTPAEERFEAALGLLGVSSSMLSGEAGHA</sequence>
<organism>
    <name type="scientific">Burkholderia mallei (strain ATCC 23344)</name>
    <dbReference type="NCBI Taxonomy" id="243160"/>
    <lineage>
        <taxon>Bacteria</taxon>
        <taxon>Pseudomonadati</taxon>
        <taxon>Pseudomonadota</taxon>
        <taxon>Betaproteobacteria</taxon>
        <taxon>Burkholderiales</taxon>
        <taxon>Burkholderiaceae</taxon>
        <taxon>Burkholderia</taxon>
        <taxon>pseudomallei group</taxon>
    </lineage>
</organism>
<dbReference type="EMBL" id="CP000010">
    <property type="protein sequence ID" value="AAU50005.1"/>
    <property type="molecule type" value="Genomic_DNA"/>
</dbReference>
<dbReference type="RefSeq" id="WP_004185441.1">
    <property type="nucleotide sequence ID" value="NC_006348.1"/>
</dbReference>
<dbReference type="RefSeq" id="YP_103584.1">
    <property type="nucleotide sequence ID" value="NC_006348.1"/>
</dbReference>
<dbReference type="SMR" id="Q62I86"/>
<dbReference type="KEGG" id="bma:BMA1997"/>
<dbReference type="PATRIC" id="fig|243160.12.peg.2064"/>
<dbReference type="eggNOG" id="COG1678">
    <property type="taxonomic scope" value="Bacteria"/>
</dbReference>
<dbReference type="HOGENOM" id="CLU_057596_1_0_4"/>
<dbReference type="Proteomes" id="UP000006693">
    <property type="component" value="Chromosome 1"/>
</dbReference>
<dbReference type="GO" id="GO:0005829">
    <property type="term" value="C:cytosol"/>
    <property type="evidence" value="ECO:0007669"/>
    <property type="project" value="TreeGrafter"/>
</dbReference>
<dbReference type="Gene3D" id="3.40.1740.10">
    <property type="entry name" value="VC0467-like"/>
    <property type="match status" value="1"/>
</dbReference>
<dbReference type="HAMAP" id="MF_00758">
    <property type="entry name" value="UPF0301"/>
    <property type="match status" value="1"/>
</dbReference>
<dbReference type="InterPro" id="IPR003774">
    <property type="entry name" value="AlgH-like"/>
</dbReference>
<dbReference type="NCBIfam" id="NF001266">
    <property type="entry name" value="PRK00228.1-1"/>
    <property type="match status" value="1"/>
</dbReference>
<dbReference type="NCBIfam" id="NF001267">
    <property type="entry name" value="PRK00228.1-2"/>
    <property type="match status" value="1"/>
</dbReference>
<dbReference type="PANTHER" id="PTHR30327">
    <property type="entry name" value="UNCHARACTERIZED PROTEIN YQGE"/>
    <property type="match status" value="1"/>
</dbReference>
<dbReference type="PANTHER" id="PTHR30327:SF1">
    <property type="entry name" value="UPF0301 PROTEIN YQGE"/>
    <property type="match status" value="1"/>
</dbReference>
<dbReference type="Pfam" id="PF02622">
    <property type="entry name" value="DUF179"/>
    <property type="match status" value="1"/>
</dbReference>
<dbReference type="SUPFAM" id="SSF143456">
    <property type="entry name" value="VC0467-like"/>
    <property type="match status" value="1"/>
</dbReference>